<sequence length="911" mass="102374">MAARVAAAVAAALLAAALLLPGAAAEWTLTKKGTVVSYDERSLMIDGKRDLFFSGAIHYPRSPPEMWDKLVKTAKMGGLNTIETYVFWNGHEPEPGKYYFEGRFDLIRFLNVIKDNDMYAIVRIGPFIQAEWNHGGLPYWLREIGHIIFRANNEPFKREMEKFVRFIVQKLKDAEMFAPQGGPIILSQIENEYGNIKKDRKVEGDKYLEWAAEMAISTGIGVPWVMCKQSIAPGEVIPTCNGRHCGDTWTLLDKNKPRLWTENWTAQFRTFGDQLAQRSAEDIAYAVLRFFAKGGTLVNYYMYHGGTNFGRTGASYVLTGYYDEAPMDEYGMCKEPKFGHLRDLHNVIKSYHKAFLWGKQSFEILGHGYEAHNYELPEDKLCLSFLSNNNTGEDGTVVFRGEKFYVPSRSVSILADCKTVVYNTKRVFVQHSERSFHTTDETSKNNVWEMYSEAIPKFRKTKVRTKQPLEQYNQTKDTSDYLWYTTSFRLESDDLPFRRDIRPVIQIKSTAHAMIGFANDAFVGTGRGSKREKSFVFEKPMDLRVGINHIAMLSSSMGMKDSGGELVEVKGGIQDCVVQGLNTGTLDLQGNGWGHKARLEGEDKEIYTEKGMAQFQWKPAENDLPITWYKRYFDEPDGDDPIVVDMSSMSKGMIYVNGEGIGRYWTSFITLAGHPSQSVYHIPRAFLKPKGNLLIIFEEELGKPGGILIQTVRRDDICVFISEHNPAQIKTWESDGGQIKLIAEDTSTRGTLNCPPKRTIQEVVFASFGNPEGACGNFTAGTCHTPDAKAIVEKECLGKESCVLPVVNTVYGADINCPATTATLAVQLLLASHVMRIAICVRPMLFARNGIVTSVLAHILGHPEWDRKSLRVKMAGRQNPCPDFTPTKSYGYLFSKPLVALTVSLDSNLSP</sequence>
<evidence type="ECO:0000255" key="1"/>
<evidence type="ECO:0000255" key="2">
    <source>
        <dbReference type="PROSITE-ProRule" id="PRU00260"/>
    </source>
</evidence>
<evidence type="ECO:0000305" key="3"/>
<keyword id="KW-0052">Apoplast</keyword>
<keyword id="KW-0325">Glycoprotein</keyword>
<keyword id="KW-0326">Glycosidase</keyword>
<keyword id="KW-0378">Hydrolase</keyword>
<keyword id="KW-1185">Reference proteome</keyword>
<keyword id="KW-0964">Secreted</keyword>
<keyword id="KW-0732">Signal</keyword>
<organism>
    <name type="scientific">Oryza sativa subsp. japonica</name>
    <name type="common">Rice</name>
    <dbReference type="NCBI Taxonomy" id="39947"/>
    <lineage>
        <taxon>Eukaryota</taxon>
        <taxon>Viridiplantae</taxon>
        <taxon>Streptophyta</taxon>
        <taxon>Embryophyta</taxon>
        <taxon>Tracheophyta</taxon>
        <taxon>Spermatophyta</taxon>
        <taxon>Magnoliopsida</taxon>
        <taxon>Liliopsida</taxon>
        <taxon>Poales</taxon>
        <taxon>Poaceae</taxon>
        <taxon>BOP clade</taxon>
        <taxon>Oryzoideae</taxon>
        <taxon>Oryzeae</taxon>
        <taxon>Oryzinae</taxon>
        <taxon>Oryza</taxon>
        <taxon>Oryza sativa</taxon>
    </lineage>
</organism>
<proteinExistence type="evidence at transcript level"/>
<comment type="catalytic activity">
    <reaction>
        <text>Hydrolysis of terminal non-reducing beta-D-galactose residues in beta-D-galactosides.</text>
        <dbReference type="EC" id="3.2.1.23"/>
    </reaction>
</comment>
<comment type="subcellular location">
    <subcellularLocation>
        <location evidence="3">Secreted</location>
        <location evidence="3">Extracellular space</location>
        <location evidence="3">Apoplast</location>
    </subcellularLocation>
</comment>
<comment type="similarity">
    <text evidence="3">Belongs to the glycosyl hydrolase 35 family.</text>
</comment>
<comment type="sequence caution" evidence="3">
    <conflict type="erroneous gene model prediction">
        <sequence resource="EMBL-CDS" id="BAF25717"/>
    </conflict>
</comment>
<protein>
    <recommendedName>
        <fullName>Beta-galactosidase 12</fullName>
        <shortName>Lactase 12</shortName>
        <ecNumber>3.2.1.23</ecNumber>
    </recommendedName>
</protein>
<accession>Q0IZZ8</accession>
<accession>A3C118</accession>
<gene>
    <name type="ordered locus">Os09g0539200</name>
    <name type="ordered locus">LOC_Os09g36810</name>
    <name type="ORF">OsJ_028990</name>
</gene>
<name>BGA12_ORYSJ</name>
<dbReference type="EC" id="3.2.1.23"/>
<dbReference type="EMBL" id="AP008215">
    <property type="protein sequence ID" value="BAF25717.1"/>
    <property type="status" value="ALT_SEQ"/>
    <property type="molecule type" value="Genomic_DNA"/>
</dbReference>
<dbReference type="EMBL" id="AP014965">
    <property type="status" value="NOT_ANNOTATED_CDS"/>
    <property type="molecule type" value="Genomic_DNA"/>
</dbReference>
<dbReference type="EMBL" id="CM000146">
    <property type="status" value="NOT_ANNOTATED_CDS"/>
    <property type="molecule type" value="Genomic_DNA"/>
</dbReference>
<dbReference type="SMR" id="Q0IZZ8"/>
<dbReference type="FunCoup" id="Q0IZZ8">
    <property type="interactions" value="12"/>
</dbReference>
<dbReference type="STRING" id="39947.Q0IZZ8"/>
<dbReference type="CAZy" id="GH35">
    <property type="family name" value="Glycoside Hydrolase Family 35"/>
</dbReference>
<dbReference type="PaxDb" id="39947-Q0IZZ8"/>
<dbReference type="KEGG" id="dosa:Os09g0539200"/>
<dbReference type="eggNOG" id="KOG0496">
    <property type="taxonomic scope" value="Eukaryota"/>
</dbReference>
<dbReference type="HOGENOM" id="CLU_007853_9_4_1"/>
<dbReference type="InParanoid" id="Q0IZZ8"/>
<dbReference type="Proteomes" id="UP000000763">
    <property type="component" value="Chromosome 9"/>
</dbReference>
<dbReference type="Proteomes" id="UP000007752">
    <property type="component" value="Chromosome 9"/>
</dbReference>
<dbReference type="Proteomes" id="UP000059680">
    <property type="component" value="Chromosome 9"/>
</dbReference>
<dbReference type="GO" id="GO:0048046">
    <property type="term" value="C:apoplast"/>
    <property type="evidence" value="ECO:0007669"/>
    <property type="project" value="UniProtKB-SubCell"/>
</dbReference>
<dbReference type="GO" id="GO:0009505">
    <property type="term" value="C:plant-type cell wall"/>
    <property type="evidence" value="ECO:0000318"/>
    <property type="project" value="GO_Central"/>
</dbReference>
<dbReference type="GO" id="GO:0005773">
    <property type="term" value="C:vacuole"/>
    <property type="evidence" value="ECO:0000318"/>
    <property type="project" value="GO_Central"/>
</dbReference>
<dbReference type="GO" id="GO:0004565">
    <property type="term" value="F:beta-galactosidase activity"/>
    <property type="evidence" value="ECO:0000318"/>
    <property type="project" value="GO_Central"/>
</dbReference>
<dbReference type="GO" id="GO:0030246">
    <property type="term" value="F:carbohydrate binding"/>
    <property type="evidence" value="ECO:0007669"/>
    <property type="project" value="InterPro"/>
</dbReference>
<dbReference type="GO" id="GO:0019388">
    <property type="term" value="P:galactose catabolic process"/>
    <property type="evidence" value="ECO:0000318"/>
    <property type="project" value="GO_Central"/>
</dbReference>
<dbReference type="GO" id="GO:0009827">
    <property type="term" value="P:plant-type cell wall modification"/>
    <property type="evidence" value="ECO:0000318"/>
    <property type="project" value="GO_Central"/>
</dbReference>
<dbReference type="CDD" id="cd22842">
    <property type="entry name" value="Gal_Rha_Lectin_BGal"/>
    <property type="match status" value="1"/>
</dbReference>
<dbReference type="FunFam" id="2.60.120.260:FF:000050">
    <property type="entry name" value="Beta-galactosidase"/>
    <property type="match status" value="1"/>
</dbReference>
<dbReference type="FunFam" id="3.20.20.80:FF:000006">
    <property type="entry name" value="Beta-galactosidase"/>
    <property type="match status" value="1"/>
</dbReference>
<dbReference type="Gene3D" id="2.60.120.740">
    <property type="match status" value="1"/>
</dbReference>
<dbReference type="Gene3D" id="2.60.120.260">
    <property type="entry name" value="Galactose-binding domain-like"/>
    <property type="match status" value="1"/>
</dbReference>
<dbReference type="Gene3D" id="3.20.20.80">
    <property type="entry name" value="Glycosidases"/>
    <property type="match status" value="1"/>
</dbReference>
<dbReference type="InterPro" id="IPR048913">
    <property type="entry name" value="BetaGal_gal-bd"/>
</dbReference>
<dbReference type="InterPro" id="IPR008979">
    <property type="entry name" value="Galactose-bd-like_sf"/>
</dbReference>
<dbReference type="InterPro" id="IPR041392">
    <property type="entry name" value="GHD"/>
</dbReference>
<dbReference type="InterPro" id="IPR031330">
    <property type="entry name" value="Gly_Hdrlase_35_cat"/>
</dbReference>
<dbReference type="InterPro" id="IPR019801">
    <property type="entry name" value="Glyco_hydro_35_CS"/>
</dbReference>
<dbReference type="InterPro" id="IPR001944">
    <property type="entry name" value="Glycoside_Hdrlase_35"/>
</dbReference>
<dbReference type="InterPro" id="IPR017853">
    <property type="entry name" value="Glycoside_hydrolase_SF"/>
</dbReference>
<dbReference type="InterPro" id="IPR000922">
    <property type="entry name" value="Lectin_gal-bd_dom"/>
</dbReference>
<dbReference type="InterPro" id="IPR043159">
    <property type="entry name" value="Lectin_gal-bd_sf"/>
</dbReference>
<dbReference type="PANTHER" id="PTHR23421">
    <property type="entry name" value="BETA-GALACTOSIDASE RELATED"/>
    <property type="match status" value="1"/>
</dbReference>
<dbReference type="Pfam" id="PF21467">
    <property type="entry name" value="BetaGal_gal-bd"/>
    <property type="match status" value="1"/>
</dbReference>
<dbReference type="Pfam" id="PF17834">
    <property type="entry name" value="GHD"/>
    <property type="match status" value="1"/>
</dbReference>
<dbReference type="Pfam" id="PF01301">
    <property type="entry name" value="Glyco_hydro_35"/>
    <property type="match status" value="1"/>
</dbReference>
<dbReference type="Pfam" id="PF02140">
    <property type="entry name" value="SUEL_Lectin"/>
    <property type="match status" value="1"/>
</dbReference>
<dbReference type="PRINTS" id="PR00742">
    <property type="entry name" value="GLHYDRLASE35"/>
</dbReference>
<dbReference type="SUPFAM" id="SSF51445">
    <property type="entry name" value="(Trans)glycosidases"/>
    <property type="match status" value="1"/>
</dbReference>
<dbReference type="SUPFAM" id="SSF49785">
    <property type="entry name" value="Galactose-binding domain-like"/>
    <property type="match status" value="2"/>
</dbReference>
<dbReference type="PROSITE" id="PS01182">
    <property type="entry name" value="GLYCOSYL_HYDROL_F35"/>
    <property type="match status" value="1"/>
</dbReference>
<dbReference type="PROSITE" id="PS50228">
    <property type="entry name" value="SUEL_LECTIN"/>
    <property type="match status" value="1"/>
</dbReference>
<reference key="1">
    <citation type="journal article" date="2005" name="Nature">
        <title>The map-based sequence of the rice genome.</title>
        <authorList>
            <consortium name="International rice genome sequencing project (IRGSP)"/>
        </authorList>
    </citation>
    <scope>NUCLEOTIDE SEQUENCE [LARGE SCALE GENOMIC DNA]</scope>
    <source>
        <strain>cv. Nipponbare</strain>
    </source>
</reference>
<reference key="2">
    <citation type="journal article" date="2008" name="Nucleic Acids Res.">
        <title>The rice annotation project database (RAP-DB): 2008 update.</title>
        <authorList>
            <consortium name="The rice annotation project (RAP)"/>
        </authorList>
    </citation>
    <scope>GENOME REANNOTATION</scope>
    <source>
        <strain>cv. Nipponbare</strain>
    </source>
</reference>
<reference key="3">
    <citation type="journal article" date="2013" name="Rice">
        <title>Improvement of the Oryza sativa Nipponbare reference genome using next generation sequence and optical map data.</title>
        <authorList>
            <person name="Kawahara Y."/>
            <person name="de la Bastide M."/>
            <person name="Hamilton J.P."/>
            <person name="Kanamori H."/>
            <person name="McCombie W.R."/>
            <person name="Ouyang S."/>
            <person name="Schwartz D.C."/>
            <person name="Tanaka T."/>
            <person name="Wu J."/>
            <person name="Zhou S."/>
            <person name="Childs K.L."/>
            <person name="Davidson R.M."/>
            <person name="Lin H."/>
            <person name="Quesada-Ocampo L."/>
            <person name="Vaillancourt B."/>
            <person name="Sakai H."/>
            <person name="Lee S.S."/>
            <person name="Kim J."/>
            <person name="Numa H."/>
            <person name="Itoh T."/>
            <person name="Buell C.R."/>
            <person name="Matsumoto T."/>
        </authorList>
    </citation>
    <scope>GENOME REANNOTATION</scope>
    <source>
        <strain>cv. Nipponbare</strain>
    </source>
</reference>
<reference key="4">
    <citation type="journal article" date="2005" name="PLoS Biol.">
        <title>The genomes of Oryza sativa: a history of duplications.</title>
        <authorList>
            <person name="Yu J."/>
            <person name="Wang J."/>
            <person name="Lin W."/>
            <person name="Li S."/>
            <person name="Li H."/>
            <person name="Zhou J."/>
            <person name="Ni P."/>
            <person name="Dong W."/>
            <person name="Hu S."/>
            <person name="Zeng C."/>
            <person name="Zhang J."/>
            <person name="Zhang Y."/>
            <person name="Li R."/>
            <person name="Xu Z."/>
            <person name="Li S."/>
            <person name="Li X."/>
            <person name="Zheng H."/>
            <person name="Cong L."/>
            <person name="Lin L."/>
            <person name="Yin J."/>
            <person name="Geng J."/>
            <person name="Li G."/>
            <person name="Shi J."/>
            <person name="Liu J."/>
            <person name="Lv H."/>
            <person name="Li J."/>
            <person name="Wang J."/>
            <person name="Deng Y."/>
            <person name="Ran L."/>
            <person name="Shi X."/>
            <person name="Wang X."/>
            <person name="Wu Q."/>
            <person name="Li C."/>
            <person name="Ren X."/>
            <person name="Wang J."/>
            <person name="Wang X."/>
            <person name="Li D."/>
            <person name="Liu D."/>
            <person name="Zhang X."/>
            <person name="Ji Z."/>
            <person name="Zhao W."/>
            <person name="Sun Y."/>
            <person name="Zhang Z."/>
            <person name="Bao J."/>
            <person name="Han Y."/>
            <person name="Dong L."/>
            <person name="Ji J."/>
            <person name="Chen P."/>
            <person name="Wu S."/>
            <person name="Liu J."/>
            <person name="Xiao Y."/>
            <person name="Bu D."/>
            <person name="Tan J."/>
            <person name="Yang L."/>
            <person name="Ye C."/>
            <person name="Zhang J."/>
            <person name="Xu J."/>
            <person name="Zhou Y."/>
            <person name="Yu Y."/>
            <person name="Zhang B."/>
            <person name="Zhuang S."/>
            <person name="Wei H."/>
            <person name="Liu B."/>
            <person name="Lei M."/>
            <person name="Yu H."/>
            <person name="Li Y."/>
            <person name="Xu H."/>
            <person name="Wei S."/>
            <person name="He X."/>
            <person name="Fang L."/>
            <person name="Zhang Z."/>
            <person name="Zhang Y."/>
            <person name="Huang X."/>
            <person name="Su Z."/>
            <person name="Tong W."/>
            <person name="Li J."/>
            <person name="Tong Z."/>
            <person name="Li S."/>
            <person name="Ye J."/>
            <person name="Wang L."/>
            <person name="Fang L."/>
            <person name="Lei T."/>
            <person name="Chen C.-S."/>
            <person name="Chen H.-C."/>
            <person name="Xu Z."/>
            <person name="Li H."/>
            <person name="Huang H."/>
            <person name="Zhang F."/>
            <person name="Xu H."/>
            <person name="Li N."/>
            <person name="Zhao C."/>
            <person name="Li S."/>
            <person name="Dong L."/>
            <person name="Huang Y."/>
            <person name="Li L."/>
            <person name="Xi Y."/>
            <person name="Qi Q."/>
            <person name="Li W."/>
            <person name="Zhang B."/>
            <person name="Hu W."/>
            <person name="Zhang Y."/>
            <person name="Tian X."/>
            <person name="Jiao Y."/>
            <person name="Liang X."/>
            <person name="Jin J."/>
            <person name="Gao L."/>
            <person name="Zheng W."/>
            <person name="Hao B."/>
            <person name="Liu S.-M."/>
            <person name="Wang W."/>
            <person name="Yuan L."/>
            <person name="Cao M."/>
            <person name="McDermott J."/>
            <person name="Samudrala R."/>
            <person name="Wang J."/>
            <person name="Wong G.K.-S."/>
            <person name="Yang H."/>
        </authorList>
    </citation>
    <scope>NUCLEOTIDE SEQUENCE [LARGE SCALE GENOMIC DNA]</scope>
    <source>
        <strain>cv. Nipponbare</strain>
    </source>
</reference>
<feature type="signal peptide" evidence="1">
    <location>
        <begin position="1"/>
        <end position="25"/>
    </location>
</feature>
<feature type="chain" id="PRO_0000294164" description="Beta-galactosidase 12">
    <location>
        <begin position="26"/>
        <end position="911"/>
    </location>
</feature>
<feature type="domain" description="SUEL-type lectin" evidence="2">
    <location>
        <begin position="744"/>
        <end position="831"/>
    </location>
</feature>
<feature type="active site" description="Proton donor" evidence="1">
    <location>
        <position position="192"/>
    </location>
</feature>
<feature type="active site" description="Nucleophile" evidence="1">
    <location>
        <position position="262"/>
    </location>
</feature>
<feature type="glycosylation site" description="N-linked (GlcNAc...) asparagine" evidence="1">
    <location>
        <position position="263"/>
    </location>
</feature>
<feature type="glycosylation site" description="N-linked (GlcNAc...) asparagine" evidence="1">
    <location>
        <position position="389"/>
    </location>
</feature>
<feature type="glycosylation site" description="N-linked (GlcNAc...) asparagine" evidence="1">
    <location>
        <position position="473"/>
    </location>
</feature>
<feature type="glycosylation site" description="N-linked (GlcNAc...) asparagine" evidence="1">
    <location>
        <position position="777"/>
    </location>
</feature>